<gene>
    <name evidence="1" type="primary">rps10</name>
    <name type="ordered locus">M1627_1997</name>
</gene>
<reference key="1">
    <citation type="journal article" date="2009" name="Proc. Natl. Acad. Sci. U.S.A.">
        <title>Biogeography of the Sulfolobus islandicus pan-genome.</title>
        <authorList>
            <person name="Reno M.L."/>
            <person name="Held N.L."/>
            <person name="Fields C.J."/>
            <person name="Burke P.V."/>
            <person name="Whitaker R.J."/>
        </authorList>
    </citation>
    <scope>NUCLEOTIDE SEQUENCE [LARGE SCALE GENOMIC DNA]</scope>
    <source>
        <strain>M.16.27</strain>
    </source>
</reference>
<evidence type="ECO:0000255" key="1">
    <source>
        <dbReference type="HAMAP-Rule" id="MF_00508"/>
    </source>
</evidence>
<evidence type="ECO:0000305" key="2"/>
<feature type="chain" id="PRO_1000206598" description="Small ribosomal subunit protein uS10">
    <location>
        <begin position="1"/>
        <end position="102"/>
    </location>
</feature>
<organism>
    <name type="scientific">Saccharolobus islandicus (strain M.16.27)</name>
    <name type="common">Sulfolobus islandicus</name>
    <dbReference type="NCBI Taxonomy" id="427318"/>
    <lineage>
        <taxon>Archaea</taxon>
        <taxon>Thermoproteota</taxon>
        <taxon>Thermoprotei</taxon>
        <taxon>Sulfolobales</taxon>
        <taxon>Sulfolobaceae</taxon>
        <taxon>Saccharolobus</taxon>
    </lineage>
</organism>
<accession>C3MZN5</accession>
<sequence length="102" mass="12112">MPTKARIRLWSTNVENLNYVITQIRGIVEKTGIEMRGPIPLPTSKLEVPIMRLPHGEGRKKWEKWEMRVHKRLIDIAADERVMRQLMRVRVPEDVYIEIQLI</sequence>
<dbReference type="EMBL" id="CP001401">
    <property type="protein sequence ID" value="ACP55867.1"/>
    <property type="molecule type" value="Genomic_DNA"/>
</dbReference>
<dbReference type="SMR" id="C3MZN5"/>
<dbReference type="KEGG" id="sim:M1627_1997"/>
<dbReference type="HOGENOM" id="CLU_122625_0_1_2"/>
<dbReference type="Proteomes" id="UP000002307">
    <property type="component" value="Chromosome"/>
</dbReference>
<dbReference type="GO" id="GO:0015935">
    <property type="term" value="C:small ribosomal subunit"/>
    <property type="evidence" value="ECO:0007669"/>
    <property type="project" value="InterPro"/>
</dbReference>
<dbReference type="GO" id="GO:0003735">
    <property type="term" value="F:structural constituent of ribosome"/>
    <property type="evidence" value="ECO:0007669"/>
    <property type="project" value="InterPro"/>
</dbReference>
<dbReference type="GO" id="GO:0000049">
    <property type="term" value="F:tRNA binding"/>
    <property type="evidence" value="ECO:0007669"/>
    <property type="project" value="UniProtKB-UniRule"/>
</dbReference>
<dbReference type="GO" id="GO:0006412">
    <property type="term" value="P:translation"/>
    <property type="evidence" value="ECO:0007669"/>
    <property type="project" value="UniProtKB-UniRule"/>
</dbReference>
<dbReference type="FunFam" id="3.30.70.600:FF:000004">
    <property type="entry name" value="30S ribosomal protein S10"/>
    <property type="match status" value="1"/>
</dbReference>
<dbReference type="Gene3D" id="3.30.70.600">
    <property type="entry name" value="Ribosomal protein S10 domain"/>
    <property type="match status" value="1"/>
</dbReference>
<dbReference type="HAMAP" id="MF_00508">
    <property type="entry name" value="Ribosomal_uS10"/>
    <property type="match status" value="1"/>
</dbReference>
<dbReference type="InterPro" id="IPR001848">
    <property type="entry name" value="Ribosomal_uS10"/>
</dbReference>
<dbReference type="InterPro" id="IPR018268">
    <property type="entry name" value="Ribosomal_uS10_CS"/>
</dbReference>
<dbReference type="InterPro" id="IPR027486">
    <property type="entry name" value="Ribosomal_uS10_dom"/>
</dbReference>
<dbReference type="InterPro" id="IPR036838">
    <property type="entry name" value="Ribosomal_uS10_dom_sf"/>
</dbReference>
<dbReference type="InterPro" id="IPR005729">
    <property type="entry name" value="Ribosomal_uS10_euk/arc"/>
</dbReference>
<dbReference type="NCBIfam" id="TIGR01046">
    <property type="entry name" value="uS10_euk_arch"/>
    <property type="match status" value="1"/>
</dbReference>
<dbReference type="PANTHER" id="PTHR11700">
    <property type="entry name" value="30S RIBOSOMAL PROTEIN S10 FAMILY MEMBER"/>
    <property type="match status" value="1"/>
</dbReference>
<dbReference type="Pfam" id="PF00338">
    <property type="entry name" value="Ribosomal_S10"/>
    <property type="match status" value="1"/>
</dbReference>
<dbReference type="PRINTS" id="PR00971">
    <property type="entry name" value="RIBOSOMALS10"/>
</dbReference>
<dbReference type="SMART" id="SM01403">
    <property type="entry name" value="Ribosomal_S10"/>
    <property type="match status" value="1"/>
</dbReference>
<dbReference type="SUPFAM" id="SSF54999">
    <property type="entry name" value="Ribosomal protein S10"/>
    <property type="match status" value="1"/>
</dbReference>
<dbReference type="PROSITE" id="PS00361">
    <property type="entry name" value="RIBOSOMAL_S10"/>
    <property type="match status" value="1"/>
</dbReference>
<keyword id="KW-0687">Ribonucleoprotein</keyword>
<keyword id="KW-0689">Ribosomal protein</keyword>
<protein>
    <recommendedName>
        <fullName evidence="1">Small ribosomal subunit protein uS10</fullName>
    </recommendedName>
    <alternativeName>
        <fullName evidence="2">30S ribosomal protein S10</fullName>
    </alternativeName>
</protein>
<name>RS10_SACI3</name>
<comment type="function">
    <text evidence="1">Involved in the binding of tRNA to the ribosomes.</text>
</comment>
<comment type="subunit">
    <text evidence="1">Part of the 30S ribosomal subunit.</text>
</comment>
<comment type="similarity">
    <text evidence="1">Belongs to the universal ribosomal protein uS10 family.</text>
</comment>
<proteinExistence type="inferred from homology"/>